<accession>Q9C7J9</accession>
<name>P2B13_ARATH</name>
<sequence>MMMLPEACVANILAFTSPADAFSSSEVSSVFRLAGDSDFVWEKFLPSHYKSLISQSTDHHRIFSSKKEIYRCLCDSLLIDNARKLFKINKFSGKISYILSARDISITYSDHASYCSWSNVSDSRFSESAELITTDRLEIKGKIQTTVLSPNTKYGAYLIMKVTNGAYGLDLVPAETSVKSKNGQNNKNTTYLCCLDEKKQQMKRLFYGNREERMAMTVEAVGGDGKRREPKARDDGWLEIELGEFVTREGEDDEVNMSLTEVKGYQLKGGIVIDGIEVRPIPLK</sequence>
<feature type="chain" id="PRO_0000272221" description="F-box protein PP2-B13">
    <location>
        <begin position="1"/>
        <end position="284"/>
    </location>
</feature>
<feature type="domain" description="F-box" evidence="1">
    <location>
        <begin position="1"/>
        <end position="44"/>
    </location>
</feature>
<evidence type="ECO:0000255" key="1">
    <source>
        <dbReference type="PROSITE-ProRule" id="PRU00080"/>
    </source>
</evidence>
<gene>
    <name type="primary">PP2B13</name>
    <name type="ordered locus">At1g56240</name>
    <name type="ORF">F14G9.15</name>
</gene>
<dbReference type="EMBL" id="AC069159">
    <property type="protein sequence ID" value="AAG50910.1"/>
    <property type="molecule type" value="Genomic_DNA"/>
</dbReference>
<dbReference type="EMBL" id="CP002684">
    <property type="protein sequence ID" value="AEE33368.1"/>
    <property type="molecule type" value="Genomic_DNA"/>
</dbReference>
<dbReference type="EMBL" id="BT012215">
    <property type="protein sequence ID" value="AAS76702.1"/>
    <property type="molecule type" value="mRNA"/>
</dbReference>
<dbReference type="EMBL" id="BT015705">
    <property type="protein sequence ID" value="AAU29482.1"/>
    <property type="molecule type" value="mRNA"/>
</dbReference>
<dbReference type="PIR" id="A96604">
    <property type="entry name" value="A96604"/>
</dbReference>
<dbReference type="RefSeq" id="NP_176020.1">
    <property type="nucleotide sequence ID" value="NM_104503.5"/>
</dbReference>
<dbReference type="SMR" id="Q9C7J9"/>
<dbReference type="STRING" id="3702.Q9C7J9"/>
<dbReference type="iPTMnet" id="Q9C7J9"/>
<dbReference type="PaxDb" id="3702-AT1G56240.1"/>
<dbReference type="DNASU" id="842077"/>
<dbReference type="EnsemblPlants" id="AT1G56240.1">
    <property type="protein sequence ID" value="AT1G56240.1"/>
    <property type="gene ID" value="AT1G56240"/>
</dbReference>
<dbReference type="GeneID" id="842077"/>
<dbReference type="Gramene" id="AT1G56240.1">
    <property type="protein sequence ID" value="AT1G56240.1"/>
    <property type="gene ID" value="AT1G56240"/>
</dbReference>
<dbReference type="KEGG" id="ath:AT1G56240"/>
<dbReference type="Araport" id="AT1G56240"/>
<dbReference type="TAIR" id="AT1G56240">
    <property type="gene designation" value="PP2-B13"/>
</dbReference>
<dbReference type="eggNOG" id="ENOG502QRA4">
    <property type="taxonomic scope" value="Eukaryota"/>
</dbReference>
<dbReference type="HOGENOM" id="CLU_050973_0_0_1"/>
<dbReference type="InParanoid" id="Q9C7J9"/>
<dbReference type="OMA" id="WSNDPLY"/>
<dbReference type="PhylomeDB" id="Q9C7J9"/>
<dbReference type="PRO" id="PR:Q9C7J9"/>
<dbReference type="Proteomes" id="UP000006548">
    <property type="component" value="Chromosome 1"/>
</dbReference>
<dbReference type="ExpressionAtlas" id="Q9C7J9">
    <property type="expression patterns" value="baseline and differential"/>
</dbReference>
<dbReference type="GO" id="GO:0030246">
    <property type="term" value="F:carbohydrate binding"/>
    <property type="evidence" value="ECO:0000250"/>
    <property type="project" value="TAIR"/>
</dbReference>
<dbReference type="CDD" id="cd22162">
    <property type="entry name" value="F-box_AtSKIP3-like"/>
    <property type="match status" value="1"/>
</dbReference>
<dbReference type="InterPro" id="IPR036047">
    <property type="entry name" value="F-box-like_dom_sf"/>
</dbReference>
<dbReference type="InterPro" id="IPR001810">
    <property type="entry name" value="F-box_dom"/>
</dbReference>
<dbReference type="InterPro" id="IPR025886">
    <property type="entry name" value="PP2-like"/>
</dbReference>
<dbReference type="PANTHER" id="PTHR32278">
    <property type="entry name" value="F-BOX DOMAIN-CONTAINING PROTEIN"/>
    <property type="match status" value="1"/>
</dbReference>
<dbReference type="PANTHER" id="PTHR32278:SF15">
    <property type="entry name" value="F-BOX PROTEIN PP2-B13-RELATED"/>
    <property type="match status" value="1"/>
</dbReference>
<dbReference type="Pfam" id="PF14299">
    <property type="entry name" value="PP2"/>
    <property type="match status" value="1"/>
</dbReference>
<dbReference type="SUPFAM" id="SSF81383">
    <property type="entry name" value="F-box domain"/>
    <property type="match status" value="1"/>
</dbReference>
<dbReference type="PROSITE" id="PS50181">
    <property type="entry name" value="FBOX"/>
    <property type="match status" value="1"/>
</dbReference>
<protein>
    <recommendedName>
        <fullName>F-box protein PP2-B13</fullName>
    </recommendedName>
    <alternativeName>
        <fullName>Protein PHLOEM PROTEIN 2-LIKE B13</fullName>
        <shortName>AtPP2-B13</shortName>
    </alternativeName>
</protein>
<organism>
    <name type="scientific">Arabidopsis thaliana</name>
    <name type="common">Mouse-ear cress</name>
    <dbReference type="NCBI Taxonomy" id="3702"/>
    <lineage>
        <taxon>Eukaryota</taxon>
        <taxon>Viridiplantae</taxon>
        <taxon>Streptophyta</taxon>
        <taxon>Embryophyta</taxon>
        <taxon>Tracheophyta</taxon>
        <taxon>Spermatophyta</taxon>
        <taxon>Magnoliopsida</taxon>
        <taxon>eudicotyledons</taxon>
        <taxon>Gunneridae</taxon>
        <taxon>Pentapetalae</taxon>
        <taxon>rosids</taxon>
        <taxon>malvids</taxon>
        <taxon>Brassicales</taxon>
        <taxon>Brassicaceae</taxon>
        <taxon>Camelineae</taxon>
        <taxon>Arabidopsis</taxon>
    </lineage>
</organism>
<proteinExistence type="evidence at transcript level"/>
<reference key="1">
    <citation type="journal article" date="2000" name="Nature">
        <title>Sequence and analysis of chromosome 1 of the plant Arabidopsis thaliana.</title>
        <authorList>
            <person name="Theologis A."/>
            <person name="Ecker J.R."/>
            <person name="Palm C.J."/>
            <person name="Federspiel N.A."/>
            <person name="Kaul S."/>
            <person name="White O."/>
            <person name="Alonso J."/>
            <person name="Altafi H."/>
            <person name="Araujo R."/>
            <person name="Bowman C.L."/>
            <person name="Brooks S.Y."/>
            <person name="Buehler E."/>
            <person name="Chan A."/>
            <person name="Chao Q."/>
            <person name="Chen H."/>
            <person name="Cheuk R.F."/>
            <person name="Chin C.W."/>
            <person name="Chung M.K."/>
            <person name="Conn L."/>
            <person name="Conway A.B."/>
            <person name="Conway A.R."/>
            <person name="Creasy T.H."/>
            <person name="Dewar K."/>
            <person name="Dunn P."/>
            <person name="Etgu P."/>
            <person name="Feldblyum T.V."/>
            <person name="Feng J.-D."/>
            <person name="Fong B."/>
            <person name="Fujii C.Y."/>
            <person name="Gill J.E."/>
            <person name="Goldsmith A.D."/>
            <person name="Haas B."/>
            <person name="Hansen N.F."/>
            <person name="Hughes B."/>
            <person name="Huizar L."/>
            <person name="Hunter J.L."/>
            <person name="Jenkins J."/>
            <person name="Johnson-Hopson C."/>
            <person name="Khan S."/>
            <person name="Khaykin E."/>
            <person name="Kim C.J."/>
            <person name="Koo H.L."/>
            <person name="Kremenetskaia I."/>
            <person name="Kurtz D.B."/>
            <person name="Kwan A."/>
            <person name="Lam B."/>
            <person name="Langin-Hooper S."/>
            <person name="Lee A."/>
            <person name="Lee J.M."/>
            <person name="Lenz C.A."/>
            <person name="Li J.H."/>
            <person name="Li Y.-P."/>
            <person name="Lin X."/>
            <person name="Liu S.X."/>
            <person name="Liu Z.A."/>
            <person name="Luros J.S."/>
            <person name="Maiti R."/>
            <person name="Marziali A."/>
            <person name="Militscher J."/>
            <person name="Miranda M."/>
            <person name="Nguyen M."/>
            <person name="Nierman W.C."/>
            <person name="Osborne B.I."/>
            <person name="Pai G."/>
            <person name="Peterson J."/>
            <person name="Pham P.K."/>
            <person name="Rizzo M."/>
            <person name="Rooney T."/>
            <person name="Rowley D."/>
            <person name="Sakano H."/>
            <person name="Salzberg S.L."/>
            <person name="Schwartz J.R."/>
            <person name="Shinn P."/>
            <person name="Southwick A.M."/>
            <person name="Sun H."/>
            <person name="Tallon L.J."/>
            <person name="Tambunga G."/>
            <person name="Toriumi M.J."/>
            <person name="Town C.D."/>
            <person name="Utterback T."/>
            <person name="Van Aken S."/>
            <person name="Vaysberg M."/>
            <person name="Vysotskaia V.S."/>
            <person name="Walker M."/>
            <person name="Wu D."/>
            <person name="Yu G."/>
            <person name="Fraser C.M."/>
            <person name="Venter J.C."/>
            <person name="Davis R.W."/>
        </authorList>
    </citation>
    <scope>NUCLEOTIDE SEQUENCE [LARGE SCALE GENOMIC DNA]</scope>
    <source>
        <strain>cv. Columbia</strain>
    </source>
</reference>
<reference key="2">
    <citation type="journal article" date="2017" name="Plant J.">
        <title>Araport11: a complete reannotation of the Arabidopsis thaliana reference genome.</title>
        <authorList>
            <person name="Cheng C.Y."/>
            <person name="Krishnakumar V."/>
            <person name="Chan A.P."/>
            <person name="Thibaud-Nissen F."/>
            <person name="Schobel S."/>
            <person name="Town C.D."/>
        </authorList>
    </citation>
    <scope>GENOME REANNOTATION</scope>
    <source>
        <strain>cv. Columbia</strain>
    </source>
</reference>
<reference key="3">
    <citation type="submission" date="2004-09" db="EMBL/GenBank/DDBJ databases">
        <title>Arabidopsis ORF clones.</title>
        <authorList>
            <person name="Shinn P."/>
            <person name="Chen H."/>
            <person name="Cheuk R.F."/>
            <person name="Kim C.J."/>
            <person name="Ecker J.R."/>
        </authorList>
    </citation>
    <scope>NUCLEOTIDE SEQUENCE [LARGE SCALE MRNA]</scope>
    <source>
        <strain>cv. Columbia</strain>
    </source>
</reference>
<reference key="4">
    <citation type="journal article" date="2003" name="Plant Physiol.">
        <title>Diversity of the superfamily of phloem lectins (phloem protein 2) in angiosperms.</title>
        <authorList>
            <person name="Dinant S."/>
            <person name="Clark A.M."/>
            <person name="Zhu Y."/>
            <person name="Vilaine F."/>
            <person name="Palauqui J.-C."/>
            <person name="Kusiak C."/>
            <person name="Thompson G.A."/>
        </authorList>
    </citation>
    <scope>GENE FAMILY</scope>
    <scope>NOMENCLATURE</scope>
</reference>
<keyword id="KW-1185">Reference proteome</keyword>